<gene>
    <name evidence="1 2 6" type="primary">NA</name>
</gene>
<evidence type="ECO:0000255" key="1">
    <source>
        <dbReference type="HAMAP-Rule" id="MF_04071"/>
    </source>
</evidence>
<evidence type="ECO:0000255" key="2">
    <source>
        <dbReference type="RuleBase" id="RU361252"/>
    </source>
</evidence>
<evidence type="ECO:0000269" key="3">
    <source>
    </source>
</evidence>
<evidence type="ECO:0000269" key="4">
    <source>
    </source>
</evidence>
<evidence type="ECO:0000305" key="5"/>
<evidence type="ECO:0000312" key="6">
    <source>
        <dbReference type="EMBL" id="AAT73329.1"/>
    </source>
</evidence>
<evidence type="ECO:0000312" key="7">
    <source>
        <dbReference type="EMBL" id="AAW80723.1"/>
    </source>
</evidence>
<evidence type="ECO:0000312" key="8">
    <source>
        <dbReference type="EMBL" id="ABP52008.1"/>
    </source>
</evidence>
<evidence type="ECO:0000312" key="9">
    <source>
        <dbReference type="EMBL" id="ADD97097.1"/>
    </source>
</evidence>
<evidence type="ECO:0000312" key="10">
    <source>
        <dbReference type="Proteomes" id="UP000102152"/>
    </source>
</evidence>
<evidence type="ECO:0000312" key="11">
    <source>
        <dbReference type="Proteomes" id="UP000206660"/>
    </source>
</evidence>
<evidence type="ECO:0000312" key="12">
    <source>
        <dbReference type="Proteomes" id="UP000206700"/>
    </source>
</evidence>
<evidence type="ECO:0007744" key="13">
    <source>
        <dbReference type="PDB" id="2HTY"/>
    </source>
</evidence>
<evidence type="ECO:0007744" key="14">
    <source>
        <dbReference type="PDB" id="2HU0"/>
    </source>
</evidence>
<evidence type="ECO:0007744" key="15">
    <source>
        <dbReference type="PDB" id="2HU4"/>
    </source>
</evidence>
<evidence type="ECO:0007744" key="16">
    <source>
        <dbReference type="PDB" id="3CKZ"/>
    </source>
</evidence>
<evidence type="ECO:0007744" key="17">
    <source>
        <dbReference type="PDB" id="3CL0"/>
    </source>
</evidence>
<evidence type="ECO:0007744" key="18">
    <source>
        <dbReference type="PDB" id="3CL2"/>
    </source>
</evidence>
<evidence type="ECO:0007829" key="19">
    <source>
        <dbReference type="PDB" id="3CKZ"/>
    </source>
</evidence>
<proteinExistence type="evidence at protein level"/>
<name>NRAM_I04A1</name>
<organism>
    <name type="scientific">Influenza A virus (strain A/Vietnam/1203/2004 H5N1)</name>
    <dbReference type="NCBI Taxonomy" id="284218"/>
    <lineage>
        <taxon>Viruses</taxon>
        <taxon>Riboviria</taxon>
        <taxon>Orthornavirae</taxon>
        <taxon>Negarnaviricota</taxon>
        <taxon>Polyploviricotina</taxon>
        <taxon>Insthoviricetes</taxon>
        <taxon>Articulavirales</taxon>
        <taxon>Orthomyxoviridae</taxon>
        <taxon>Alphainfluenzavirus</taxon>
        <taxon>Alphainfluenzavirus influenzae</taxon>
        <taxon>Influenza A virus</taxon>
    </lineage>
</organism>
<comment type="function">
    <text evidence="1">Catalyzes the removal of terminal sialic acid residues from viral and cellular glycoconjugates. Cleaves off the terminal sialic acids on the glycosylated HA during virus budding to facilitate virus release. Additionally helps virus spread through the circulation by further removing sialic acids from the cell surface. These cleavages prevent self-aggregation and ensure the efficient spread of the progeny virus from cell to cell. Otherwise, infection would be limited to one round of replication. Described as a receptor-destroying enzyme because it cleaves a terminal sialic acid from the cellular receptors. May facilitate viral invasion of the upper airways by cleaving the sialic acid moities on the mucin of the airway epithelial cells. Likely to plays a role in the budding process through its association with lipid rafts during intracellular transport. May additionally display a raft-association independent effect on budding. Plays a role in the determination of host range restriction on replication and virulence. Sialidase activity in late endosome/lysosome traffic seems to enhance virus replication.</text>
</comment>
<comment type="catalytic activity">
    <reaction evidence="1 2">
        <text>Hydrolysis of alpha-(2-&gt;3)-, alpha-(2-&gt;6)-, alpha-(2-&gt;8)- glycosidic linkages of terminal sialic acid residues in oligosaccharides, glycoproteins, glycolipids, colominic acid and synthetic substrates.</text>
        <dbReference type="EC" id="3.2.1.18"/>
    </reaction>
</comment>
<comment type="cofactor">
    <cofactor evidence="1 2">
        <name>Ca(2+)</name>
        <dbReference type="ChEBI" id="CHEBI:29108"/>
    </cofactor>
</comment>
<comment type="activity regulation">
    <text evidence="1">Inhibited by the neuraminidase inhibitors zanamivir (Relenza) and oseltamivir (Tamiflu). These drugs interfere with the release of progeny virus from infected cells and are effective against all influenza strains. Resistance to neuraminidase inhibitors is quite rare.</text>
</comment>
<comment type="subunit">
    <text evidence="1 2">Homotetramer.</text>
</comment>
<comment type="interaction">
    <interactant intactId="EBI-15597132">
        <id>Q6DPL2</id>
    </interactant>
    <interactant intactId="EBI-15597132">
        <id>Q6DPL2</id>
        <label>NA</label>
    </interactant>
    <organismsDiffer>false</organismsDiffer>
    <experiments>2</experiments>
</comment>
<comment type="subcellular location">
    <subcellularLocation>
        <location evidence="1">Virion membrane</location>
    </subcellularLocation>
    <subcellularLocation>
        <location evidence="1">Host apical cell membrane</location>
        <topology evidence="1">Single-pass type II membrane protein</topology>
    </subcellularLocation>
    <text evidence="1">Preferentially accumulates at the apical plasma membrane in infected polarized epithelial cells, which is the virus assembly site. Uses lipid rafts for cell surface transport and apical sorting. In the virion, forms a mushroom-shaped spike on the surface of the membrane.</text>
</comment>
<comment type="domain">
    <text evidence="1">Intact N-terminus is essential for virion morphogenesis. Possess two apical sorting signals, one in the ectodomain, which is likely to be a glycan, and the other in the transmembrane domain. The transmembrane domain also plays a role in lipid raft association.</text>
</comment>
<comment type="PTM">
    <text evidence="1 2">N-glycosylated.</text>
</comment>
<comment type="similarity">
    <text evidence="1 2">Belongs to the glycosyl hydrolase 34 family.</text>
</comment>
<keyword id="KW-0002">3D-structure</keyword>
<keyword id="KW-0106">Calcium</keyword>
<keyword id="KW-1015">Disulfide bond</keyword>
<keyword id="KW-0325">Glycoprotein</keyword>
<keyword id="KW-0326">Glycosidase</keyword>
<keyword id="KW-1032">Host cell membrane</keyword>
<keyword id="KW-1043">Host membrane</keyword>
<keyword id="KW-0378">Hydrolase</keyword>
<keyword id="KW-0472">Membrane</keyword>
<keyword id="KW-0479">Metal-binding</keyword>
<keyword id="KW-0735">Signal-anchor</keyword>
<keyword id="KW-0812">Transmembrane</keyword>
<keyword id="KW-1133">Transmembrane helix</keyword>
<keyword id="KW-0946">Virion</keyword>
<protein>
    <recommendedName>
        <fullName evidence="1 2">Neuraminidase</fullName>
        <ecNumber evidence="1 2">3.2.1.18</ecNumber>
    </recommendedName>
</protein>
<dbReference type="EC" id="3.2.1.18" evidence="1 2"/>
<dbReference type="EMBL" id="AY651447">
    <property type="protein sequence ID" value="AAT73329.1"/>
    <property type="molecule type" value="Viral_cRNA"/>
</dbReference>
<dbReference type="EMBL" id="AY818141">
    <property type="protein sequence ID" value="AAW80723.1"/>
    <property type="molecule type" value="Genomic_RNA"/>
</dbReference>
<dbReference type="EMBL" id="EF541467">
    <property type="protein sequence ID" value="ABP52008.1"/>
    <property type="molecule type" value="Viral_cRNA"/>
</dbReference>
<dbReference type="EMBL" id="HM006761">
    <property type="protein sequence ID" value="ADD97097.1"/>
    <property type="molecule type" value="Viral_cRNA"/>
</dbReference>
<dbReference type="PDB" id="2HTY">
    <property type="method" value="X-ray"/>
    <property type="resolution" value="2.50 A"/>
    <property type="chains" value="A/B/C/D/E/F/G/H=63-449"/>
</dbReference>
<dbReference type="PDB" id="2HU0">
    <property type="method" value="X-ray"/>
    <property type="resolution" value="2.95 A"/>
    <property type="chains" value="A/B/C/D/E/F/G/H=63-449"/>
</dbReference>
<dbReference type="PDB" id="2HU4">
    <property type="method" value="X-ray"/>
    <property type="resolution" value="2.50 A"/>
    <property type="chains" value="A/B/C/D/E/F/G/H=63-449"/>
</dbReference>
<dbReference type="PDB" id="3CKZ">
    <property type="method" value="X-ray"/>
    <property type="resolution" value="1.90 A"/>
    <property type="chains" value="A=63-447"/>
</dbReference>
<dbReference type="PDB" id="3CL0">
    <property type="method" value="X-ray"/>
    <property type="resolution" value="2.20 A"/>
    <property type="chains" value="A=63-447"/>
</dbReference>
<dbReference type="PDB" id="3CL2">
    <property type="method" value="X-ray"/>
    <property type="resolution" value="2.54 A"/>
    <property type="chains" value="A/B/C/D/E/F/G/H=63-447"/>
</dbReference>
<dbReference type="PDBsum" id="2HTY"/>
<dbReference type="PDBsum" id="2HU0"/>
<dbReference type="PDBsum" id="2HU4"/>
<dbReference type="PDBsum" id="3CKZ"/>
<dbReference type="PDBsum" id="3CL0"/>
<dbReference type="PDBsum" id="3CL2"/>
<dbReference type="SMR" id="Q6DPL2"/>
<dbReference type="DIP" id="DIP-59842N"/>
<dbReference type="CAZy" id="GH34">
    <property type="family name" value="Glycoside Hydrolase Family 34"/>
</dbReference>
<dbReference type="ABCD" id="Q6DPL2">
    <property type="antibodies" value="1 sequenced antibody"/>
</dbReference>
<dbReference type="BRENDA" id="3.2.1.18">
    <property type="organism ID" value="7479"/>
</dbReference>
<dbReference type="SABIO-RK" id="Q6DPL2"/>
<dbReference type="EvolutionaryTrace" id="Q6DPL2"/>
<dbReference type="Proteomes" id="UP000102152">
    <property type="component" value="Genome"/>
</dbReference>
<dbReference type="Proteomes" id="UP000206660">
    <property type="component" value="Genome"/>
</dbReference>
<dbReference type="Proteomes" id="UP000206680">
    <property type="component" value="Genome"/>
</dbReference>
<dbReference type="Proteomes" id="UP000206700">
    <property type="component" value="Genome"/>
</dbReference>
<dbReference type="GO" id="GO:0020002">
    <property type="term" value="C:host cell plasma membrane"/>
    <property type="evidence" value="ECO:0007669"/>
    <property type="project" value="UniProtKB-SubCell"/>
</dbReference>
<dbReference type="GO" id="GO:0016020">
    <property type="term" value="C:membrane"/>
    <property type="evidence" value="ECO:0007669"/>
    <property type="project" value="UniProtKB-UniRule"/>
</dbReference>
<dbReference type="GO" id="GO:0055036">
    <property type="term" value="C:virion membrane"/>
    <property type="evidence" value="ECO:0007669"/>
    <property type="project" value="UniProtKB-SubCell"/>
</dbReference>
<dbReference type="GO" id="GO:0004308">
    <property type="term" value="F:exo-alpha-sialidase activity"/>
    <property type="evidence" value="ECO:0007669"/>
    <property type="project" value="UniProtKB-UniRule"/>
</dbReference>
<dbReference type="GO" id="GO:0042802">
    <property type="term" value="F:identical protein binding"/>
    <property type="evidence" value="ECO:0000353"/>
    <property type="project" value="IntAct"/>
</dbReference>
<dbReference type="GO" id="GO:0046872">
    <property type="term" value="F:metal ion binding"/>
    <property type="evidence" value="ECO:0007669"/>
    <property type="project" value="UniProtKB-UniRule"/>
</dbReference>
<dbReference type="GO" id="GO:0005975">
    <property type="term" value="P:carbohydrate metabolic process"/>
    <property type="evidence" value="ECO:0007669"/>
    <property type="project" value="InterPro"/>
</dbReference>
<dbReference type="GO" id="GO:0046761">
    <property type="term" value="P:viral budding from plasma membrane"/>
    <property type="evidence" value="ECO:0007669"/>
    <property type="project" value="UniProtKB-UniRule"/>
</dbReference>
<dbReference type="CDD" id="cd15483">
    <property type="entry name" value="Influenza_NA"/>
    <property type="match status" value="1"/>
</dbReference>
<dbReference type="FunFam" id="2.120.10.10:FF:000001">
    <property type="entry name" value="Neuraminidase"/>
    <property type="match status" value="1"/>
</dbReference>
<dbReference type="Gene3D" id="2.120.10.10">
    <property type="match status" value="1"/>
</dbReference>
<dbReference type="HAMAP" id="MF_04071">
    <property type="entry name" value="INFV_NRAM"/>
    <property type="match status" value="1"/>
</dbReference>
<dbReference type="InterPro" id="IPR001860">
    <property type="entry name" value="Glyco_hydro_34"/>
</dbReference>
<dbReference type="InterPro" id="IPR033654">
    <property type="entry name" value="Sialidase_Influenza_A/B"/>
</dbReference>
<dbReference type="InterPro" id="IPR036278">
    <property type="entry name" value="Sialidase_sf"/>
</dbReference>
<dbReference type="Pfam" id="PF00064">
    <property type="entry name" value="Neur"/>
    <property type="match status" value="1"/>
</dbReference>
<dbReference type="SUPFAM" id="SSF50939">
    <property type="entry name" value="Sialidases"/>
    <property type="match status" value="1"/>
</dbReference>
<reference evidence="6" key="1">
    <citation type="journal article" date="2004" name="Nature">
        <title>Genesis of a highly pathogenic and potentially pandemic H5N1 influenza virus in eastern Asia.</title>
        <authorList>
            <person name="Li K.S."/>
            <person name="Guan Y."/>
            <person name="Wang J."/>
            <person name="Smith G.J.D."/>
            <person name="Xu K.M."/>
            <person name="Duan L."/>
            <person name="Rahardjo A.P."/>
            <person name="Puthavathana P."/>
            <person name="Buranathai C."/>
            <person name="Nguyen T.D."/>
            <person name="Estoepangestie A.T.S."/>
            <person name="Chaisingh A."/>
            <person name="Auewarakul P."/>
            <person name="Long H.T."/>
            <person name="Hanh N.T.H."/>
            <person name="Webby R.J."/>
            <person name="Poon L.L.M."/>
            <person name="Chen H."/>
            <person name="Shortridge K.F."/>
            <person name="Yuen K.Y."/>
            <person name="Webster R.G."/>
            <person name="Peiris J.S.M."/>
        </authorList>
    </citation>
    <scope>NUCLEOTIDE SEQUENCE [LARGE SCALE GENOMIC DNA]</scope>
    <source>
        <strain evidence="6">A/Viet Nam/1203/2004</strain>
    </source>
</reference>
<reference evidence="12" key="2">
    <citation type="journal article" date="2005" name="Emerg. Infect. Dis.">
        <title>Evolution of H5N1 avian influenza viruses in Asia.</title>
        <authorList>
            <consortium name="World Health Organization Global Influenza Program Surveillance Network"/>
        </authorList>
    </citation>
    <scope>NUCLEOTIDE SEQUENCE [LARGE SCALE GENOMIC DNA]</scope>
    <source>
        <strain evidence="8">A/Viet Nam/1203/2004</strain>
    </source>
</reference>
<reference evidence="10" key="3">
    <citation type="journal article" date="2005" name="J. Virol.">
        <title>Lethality to ferrets of H5N1 influenza viruses isolated from humans and poultry in 2004.</title>
        <authorList>
            <person name="Govorkova E.A."/>
            <person name="Rehg J.E."/>
            <person name="Krauss S."/>
            <person name="Yen H.L."/>
            <person name="Guan Y."/>
            <person name="Peiris M."/>
            <person name="Nguyen T.D."/>
            <person name="Hanh T.H."/>
            <person name="Puthavathana P."/>
            <person name="Long H.T."/>
            <person name="Buranathai C."/>
            <person name="Lim W."/>
            <person name="Webster R.G."/>
            <person name="Hoffmann E."/>
        </authorList>
    </citation>
    <scope>NUCLEOTIDE SEQUENCE [LARGE SCALE GENOMIC DNA]</scope>
    <source>
        <strain evidence="7">A/Viet Nam/1203/2004</strain>
    </source>
</reference>
<reference evidence="11" key="4">
    <citation type="submission" date="2010-03" db="EMBL/GenBank/DDBJ databases">
        <title>Acquisition of virulence mutations in avian H5N1 influenza virus during a single passage in ferrets.</title>
        <authorList>
            <person name="Butler J."/>
            <person name="Middleton D."/>
            <person name="Klippel J."/>
            <person name="Rockman S."/>
            <person name="Brown L."/>
            <person name="Sapats S."/>
        </authorList>
    </citation>
    <scope>NUCLEOTIDE SEQUENCE [LARGE SCALE GENOMIC DNA]</scope>
    <source>
        <strain evidence="9">A/Viet Nam/1203/2004</strain>
    </source>
</reference>
<reference evidence="13 14 15" key="5">
    <citation type="journal article" date="2006" name="Nature">
        <title>The structure of H5N1 avian influenza neuraminidase suggests new opportunities for drug design.</title>
        <authorList>
            <person name="Russell R.J."/>
            <person name="Haire L.F."/>
            <person name="Stevens D.J."/>
            <person name="Collins P.J."/>
            <person name="Lin Y.P."/>
            <person name="Blackburn G.M."/>
            <person name="Hay A.J."/>
            <person name="Gamblin S.J."/>
            <person name="Skehel J.J."/>
        </authorList>
    </citation>
    <scope>X-RAY CRYSTALLOGRAPHY (2.50 ANGSTROMS) OF 63-447 OF MUTANT HIS-233 IN COMPLEX WITH CALCIUM AND INHIBITOR OSELTAMIVIR</scope>
    <scope>DISULFIDE BONDS</scope>
</reference>
<reference evidence="16 17 18" key="6">
    <citation type="journal article" date="2008" name="Nature">
        <title>Crystal structures of oseltamivir-resistant influenza virus neuraminidase mutants.</title>
        <authorList>
            <person name="Collins P.J."/>
            <person name="Haire L.F."/>
            <person name="Lin Y.P."/>
            <person name="Liu J."/>
            <person name="Russell R.J."/>
            <person name="Walker P.A."/>
            <person name="Skehel J.J."/>
            <person name="Martin S.R."/>
            <person name="Hay A.J."/>
            <person name="Gamblin S.J."/>
        </authorList>
    </citation>
    <scope>X-RAY CRYSTALLOGRAPHY (1.90 ANGSTROMS) OF 63-447 OF MUTANTS HIS-233;HIS-255 AND HIS-233;ASN-275 IN COMPLEX WITH CALCIUM AND INHIBITORS ZANAMIVIR AND OSELTAMIVIR</scope>
    <scope>DISULFIDE BONDS</scope>
</reference>
<sequence length="449" mass="49081">MNPNQKIITIGSICMVTGIVSLMLQIGNMISIWVSHSIHTGNQHQSEPISNTNFLTEKAVASVKLAGNSSLCPINGWAVYSKDNSIRIGSKGDVFVIREPFISCSHLECRTFFLTQGALLNDKHSNGTVKDRSPHRTLMSCPVGEAPSPYNSRFESVAWSASACHDGTSWLTIGISGPDNGAVAVLKYNGIITDTIKSWRNNILRTQESECACVNGSCFTVMTDGPSNGQASHKIFKMEKGKVVKSVELDAPNYHYEECSCYPNAGEITCVCRDNWHGSNRPWVSFNQNLEYQIGYICSGVFGDNPRPNDGTGSCGPVSSNGAYGVKGFSFKYGNGVWIGRTKSTNSRSGFEMIWDPNGWTETDSSFSVKQDIVAITDWSGYSGSFVQHPELTGLDCIRPCFWVELIRGRPKESTIWTSGSSISFCGVNSDTVGWSWPDGAELPFTIDK</sequence>
<feature type="chain" id="PRO_0000459081" description="Neuraminidase">
    <location>
        <begin position="1"/>
        <end position="449"/>
    </location>
</feature>
<feature type="topological domain" description="Intravirion" evidence="5">
    <location>
        <begin position="1"/>
        <end position="6"/>
    </location>
</feature>
<feature type="transmembrane region" description="Helical" evidence="1">
    <location>
        <begin position="7"/>
        <end position="34"/>
    </location>
</feature>
<feature type="topological domain" description="Virion surface" evidence="5">
    <location>
        <begin position="35"/>
        <end position="449"/>
    </location>
</feature>
<feature type="region of interest" description="Involved in apical transport and lipid raft association" evidence="1">
    <location>
        <begin position="11"/>
        <end position="33"/>
    </location>
</feature>
<feature type="region of interest" description="Hypervariable stalk region" evidence="1">
    <location>
        <begin position="36"/>
        <end position="70"/>
    </location>
</feature>
<feature type="region of interest" description="Head of neuraminidase" evidence="1">
    <location>
        <begin position="71"/>
        <end position="449"/>
    </location>
</feature>
<feature type="active site" description="Proton donor/acceptor" evidence="1">
    <location>
        <position position="131"/>
    </location>
</feature>
<feature type="active site" description="Nucleophile" evidence="1">
    <location>
        <position position="382"/>
    </location>
</feature>
<feature type="binding site" evidence="1">
    <location>
        <position position="98"/>
    </location>
    <ligand>
        <name>substrate</name>
    </ligand>
</feature>
<feature type="binding site" evidence="1">
    <location>
        <position position="132"/>
    </location>
    <ligand>
        <name>substrate</name>
    </ligand>
</feature>
<feature type="binding site" evidence="1">
    <location>
        <begin position="257"/>
        <end position="258"/>
    </location>
    <ligand>
        <name>substrate</name>
    </ligand>
</feature>
<feature type="binding site" evidence="1">
    <location>
        <position position="273"/>
    </location>
    <ligand>
        <name>substrate</name>
    </ligand>
</feature>
<feature type="binding site" evidence="1 3 4 13 16 17">
    <location>
        <position position="274"/>
    </location>
    <ligand>
        <name>Ca(2+)</name>
        <dbReference type="ChEBI" id="CHEBI:29108"/>
    </ligand>
</feature>
<feature type="binding site" evidence="1 3 4 13 16 17">
    <location>
        <position position="278"/>
    </location>
    <ligand>
        <name>Ca(2+)</name>
        <dbReference type="ChEBI" id="CHEBI:29108"/>
    </ligand>
</feature>
<feature type="binding site" evidence="1 3 4 13 16 17">
    <location>
        <position position="304"/>
    </location>
    <ligand>
        <name>Ca(2+)</name>
        <dbReference type="ChEBI" id="CHEBI:29108"/>
    </ligand>
</feature>
<feature type="binding site" evidence="3 4 13 16 17">
    <location>
        <position position="322"/>
    </location>
    <ligand>
        <name>Ca(2+)</name>
        <dbReference type="ChEBI" id="CHEBI:29108"/>
    </ligand>
</feature>
<feature type="binding site" evidence="3 4 13 16">
    <location>
        <position position="324"/>
    </location>
    <ligand>
        <name>Ca(2+)</name>
        <dbReference type="ChEBI" id="CHEBI:29108"/>
    </ligand>
</feature>
<feature type="binding site" evidence="1">
    <location>
        <position position="348"/>
    </location>
    <ligand>
        <name>substrate</name>
    </ligand>
</feature>
<feature type="disulfide bond" evidence="1 3 4 13 14 15 16 17 18">
    <location>
        <begin position="72"/>
        <end position="397"/>
    </location>
</feature>
<feature type="disulfide bond" evidence="1 3 4 13 14 15 16 17 18">
    <location>
        <begin position="104"/>
        <end position="109"/>
    </location>
</feature>
<feature type="disulfide bond" evidence="1 3 4 13 14 15 16 17 18">
    <location>
        <begin position="164"/>
        <end position="211"/>
    </location>
</feature>
<feature type="disulfide bond" evidence="1 3 4 13 14 15 16 17 18">
    <location>
        <begin position="213"/>
        <end position="218"/>
    </location>
</feature>
<feature type="disulfide bond" evidence="1 3 4 13 14 15 16 17 18">
    <location>
        <begin position="259"/>
        <end position="272"/>
    </location>
</feature>
<feature type="disulfide bond" evidence="1 3 4 13 14 15 16 17 18">
    <location>
        <begin position="261"/>
        <end position="270"/>
    </location>
</feature>
<feature type="disulfide bond" evidence="1 3 4 13 14 15 16 17 18">
    <location>
        <begin position="298"/>
        <end position="315"/>
    </location>
</feature>
<feature type="disulfide bond" evidence="1 3 4 13 14 15 16 17 18">
    <location>
        <begin position="401"/>
        <end position="426"/>
    </location>
</feature>
<feature type="strand" evidence="19">
    <location>
        <begin position="75"/>
        <end position="82"/>
    </location>
</feature>
<feature type="helix" evidence="19">
    <location>
        <begin position="85"/>
        <end position="89"/>
    </location>
</feature>
<feature type="strand" evidence="19">
    <location>
        <begin position="95"/>
        <end position="104"/>
    </location>
</feature>
<feature type="strand" evidence="19">
    <location>
        <begin position="109"/>
        <end position="119"/>
    </location>
</feature>
<feature type="helix" evidence="19">
    <location>
        <begin position="123"/>
        <end position="125"/>
    </location>
</feature>
<feature type="turn" evidence="19">
    <location>
        <begin position="126"/>
        <end position="129"/>
    </location>
</feature>
<feature type="strand" evidence="19">
    <location>
        <begin position="137"/>
        <end position="142"/>
    </location>
</feature>
<feature type="turn" evidence="19">
    <location>
        <begin position="149"/>
        <end position="151"/>
    </location>
</feature>
<feature type="strand" evidence="19">
    <location>
        <begin position="153"/>
        <end position="157"/>
    </location>
</feature>
<feature type="strand" evidence="19">
    <location>
        <begin position="159"/>
        <end position="165"/>
    </location>
</feature>
<feature type="strand" evidence="19">
    <location>
        <begin position="167"/>
        <end position="177"/>
    </location>
</feature>
<feature type="turn" evidence="19">
    <location>
        <begin position="179"/>
        <end position="181"/>
    </location>
</feature>
<feature type="strand" evidence="19">
    <location>
        <begin position="183"/>
        <end position="188"/>
    </location>
</feature>
<feature type="strand" evidence="19">
    <location>
        <begin position="191"/>
        <end position="197"/>
    </location>
</feature>
<feature type="strand" evidence="19">
    <location>
        <begin position="199"/>
        <end position="202"/>
    </location>
</feature>
<feature type="strand" evidence="19">
    <location>
        <begin position="208"/>
        <end position="210"/>
    </location>
</feature>
<feature type="strand" evidence="19">
    <location>
        <begin position="212"/>
        <end position="214"/>
    </location>
</feature>
<feature type="strand" evidence="19">
    <location>
        <begin position="217"/>
        <end position="225"/>
    </location>
</feature>
<feature type="strand" evidence="19">
    <location>
        <begin position="227"/>
        <end position="229"/>
    </location>
</feature>
<feature type="strand" evidence="19">
    <location>
        <begin position="232"/>
        <end position="239"/>
    </location>
</feature>
<feature type="strand" evidence="19">
    <location>
        <begin position="242"/>
        <end position="248"/>
    </location>
</feature>
<feature type="strand" evidence="19">
    <location>
        <begin position="260"/>
        <end position="264"/>
    </location>
</feature>
<feature type="strand" evidence="19">
    <location>
        <begin position="267"/>
        <end position="271"/>
    </location>
</feature>
<feature type="turn" evidence="19">
    <location>
        <begin position="275"/>
        <end position="277"/>
    </location>
</feature>
<feature type="strand" evidence="19">
    <location>
        <begin position="282"/>
        <end position="287"/>
    </location>
</feature>
<feature type="strand" evidence="19">
    <location>
        <begin position="292"/>
        <end position="296"/>
    </location>
</feature>
<feature type="strand" evidence="19">
    <location>
        <begin position="304"/>
        <end position="306"/>
    </location>
</feature>
<feature type="strand" evidence="19">
    <location>
        <begin position="330"/>
        <end position="333"/>
    </location>
</feature>
<feature type="strand" evidence="19">
    <location>
        <begin position="336"/>
        <end position="341"/>
    </location>
</feature>
<feature type="strand" evidence="19">
    <location>
        <begin position="345"/>
        <end position="356"/>
    </location>
</feature>
<feature type="turn" evidence="19">
    <location>
        <begin position="357"/>
        <end position="361"/>
    </location>
</feature>
<feature type="strand" evidence="19">
    <location>
        <begin position="368"/>
        <end position="379"/>
    </location>
</feature>
<feature type="strand" evidence="19">
    <location>
        <begin position="383"/>
        <end position="388"/>
    </location>
</feature>
<feature type="helix" evidence="19">
    <location>
        <begin position="390"/>
        <end position="393"/>
    </location>
</feature>
<feature type="strand" evidence="19">
    <location>
        <begin position="396"/>
        <end position="409"/>
    </location>
</feature>
<feature type="turn" evidence="19">
    <location>
        <begin position="410"/>
        <end position="412"/>
    </location>
</feature>
<feature type="strand" evidence="19">
    <location>
        <begin position="413"/>
        <end position="416"/>
    </location>
</feature>
<feature type="strand" evidence="19">
    <location>
        <begin position="418"/>
        <end position="430"/>
    </location>
</feature>
<accession>Q6DPL2</accession>
<organismHost>
    <name type="scientific">Aves</name>
    <dbReference type="NCBI Taxonomy" id="8782"/>
</organismHost>
<organismHost>
    <name type="scientific">Homo sapiens</name>
    <name type="common">Human</name>
    <dbReference type="NCBI Taxonomy" id="9606"/>
</organismHost>
<organismHost>
    <name type="scientific">Mustela putorius furo</name>
    <name type="common">European domestic ferret</name>
    <name type="synonym">Mustela furo</name>
    <dbReference type="NCBI Taxonomy" id="9669"/>
</organismHost>